<accession>P75370</accession>
<dbReference type="EMBL" id="U00089">
    <property type="protein sequence ID" value="AAB96072.1"/>
    <property type="molecule type" value="Genomic_DNA"/>
</dbReference>
<dbReference type="PIR" id="S73750">
    <property type="entry name" value="S73750"/>
</dbReference>
<dbReference type="RefSeq" id="NP_110104.1">
    <property type="nucleotide sequence ID" value="NC_000912.1"/>
</dbReference>
<dbReference type="RefSeq" id="WP_010874772.1">
    <property type="nucleotide sequence ID" value="NC_000912.1"/>
</dbReference>
<dbReference type="SMR" id="P75370"/>
<dbReference type="IntAct" id="P75370">
    <property type="interactions" value="3"/>
</dbReference>
<dbReference type="STRING" id="272634.MPN_416"/>
<dbReference type="EnsemblBacteria" id="AAB96072">
    <property type="protein sequence ID" value="AAB96072"/>
    <property type="gene ID" value="MPN_416"/>
</dbReference>
<dbReference type="KEGG" id="mpn:MPN_416"/>
<dbReference type="PATRIC" id="fig|272634.6.peg.451"/>
<dbReference type="HOGENOM" id="CLU_000604_1_22_14"/>
<dbReference type="OrthoDB" id="389713at2"/>
<dbReference type="BioCyc" id="MPNE272634:G1GJ3-674-MONOMER"/>
<dbReference type="Proteomes" id="UP000000808">
    <property type="component" value="Chromosome"/>
</dbReference>
<dbReference type="GO" id="GO:0005524">
    <property type="term" value="F:ATP binding"/>
    <property type="evidence" value="ECO:0007669"/>
    <property type="project" value="UniProtKB-KW"/>
</dbReference>
<dbReference type="GO" id="GO:0016887">
    <property type="term" value="F:ATP hydrolysis activity"/>
    <property type="evidence" value="ECO:0007669"/>
    <property type="project" value="InterPro"/>
</dbReference>
<dbReference type="Gene3D" id="3.40.50.300">
    <property type="entry name" value="P-loop containing nucleotide triphosphate hydrolases"/>
    <property type="match status" value="1"/>
</dbReference>
<dbReference type="InterPro" id="IPR003593">
    <property type="entry name" value="AAA+_ATPase"/>
</dbReference>
<dbReference type="InterPro" id="IPR003439">
    <property type="entry name" value="ABC_transporter-like_ATP-bd"/>
</dbReference>
<dbReference type="InterPro" id="IPR017871">
    <property type="entry name" value="ABC_transporter-like_CS"/>
</dbReference>
<dbReference type="InterPro" id="IPR050153">
    <property type="entry name" value="Metal_Ion_Import_ABC"/>
</dbReference>
<dbReference type="InterPro" id="IPR027417">
    <property type="entry name" value="P-loop_NTPase"/>
</dbReference>
<dbReference type="PANTHER" id="PTHR42734">
    <property type="entry name" value="METAL TRANSPORT SYSTEM ATP-BINDING PROTEIN TM_0124-RELATED"/>
    <property type="match status" value="1"/>
</dbReference>
<dbReference type="PANTHER" id="PTHR42734:SF6">
    <property type="entry name" value="MOLYBDATE IMPORT ATP-BINDING PROTEIN MOLC"/>
    <property type="match status" value="1"/>
</dbReference>
<dbReference type="Pfam" id="PF00005">
    <property type="entry name" value="ABC_tran"/>
    <property type="match status" value="1"/>
</dbReference>
<dbReference type="SMART" id="SM00382">
    <property type="entry name" value="AAA"/>
    <property type="match status" value="1"/>
</dbReference>
<dbReference type="SUPFAM" id="SSF52540">
    <property type="entry name" value="P-loop containing nucleoside triphosphate hydrolases"/>
    <property type="match status" value="1"/>
</dbReference>
<dbReference type="PROSITE" id="PS00211">
    <property type="entry name" value="ABC_TRANSPORTER_1"/>
    <property type="match status" value="1"/>
</dbReference>
<dbReference type="PROSITE" id="PS50893">
    <property type="entry name" value="ABC_TRANSPORTER_2"/>
    <property type="match status" value="1"/>
</dbReference>
<feature type="chain" id="PRO_0000092679" description="Probable ABC transporter ATP-binding protein p29">
    <location>
        <begin position="1"/>
        <end position="244"/>
    </location>
</feature>
<feature type="domain" description="ABC transporter" evidence="1">
    <location>
        <begin position="6"/>
        <end position="241"/>
    </location>
</feature>
<feature type="binding site" evidence="1">
    <location>
        <begin position="38"/>
        <end position="45"/>
    </location>
    <ligand>
        <name>ATP</name>
        <dbReference type="ChEBI" id="CHEBI:30616"/>
    </ligand>
</feature>
<name>P29_MYCPN</name>
<organism>
    <name type="scientific">Mycoplasma pneumoniae (strain ATCC 29342 / M129 / Subtype 1)</name>
    <name type="common">Mycoplasmoides pneumoniae</name>
    <dbReference type="NCBI Taxonomy" id="272634"/>
    <lineage>
        <taxon>Bacteria</taxon>
        <taxon>Bacillati</taxon>
        <taxon>Mycoplasmatota</taxon>
        <taxon>Mycoplasmoidales</taxon>
        <taxon>Mycoplasmoidaceae</taxon>
        <taxon>Mycoplasmoides</taxon>
    </lineage>
</organism>
<reference key="1">
    <citation type="journal article" date="1996" name="Nucleic Acids Res.">
        <title>Complete sequence analysis of the genome of the bacterium Mycoplasma pneumoniae.</title>
        <authorList>
            <person name="Himmelreich R."/>
            <person name="Hilbert H."/>
            <person name="Plagens H."/>
            <person name="Pirkl E."/>
            <person name="Li B.-C."/>
            <person name="Herrmann R."/>
        </authorList>
    </citation>
    <scope>NUCLEOTIDE SEQUENCE [LARGE SCALE GENOMIC DNA]</scope>
    <source>
        <strain>ATCC 29342 / M129 / Subtype 1</strain>
    </source>
</reference>
<protein>
    <recommendedName>
        <fullName>Probable ABC transporter ATP-binding protein p29</fullName>
    </recommendedName>
</protein>
<sequence>MVNPVLVFDQVSLRYNGAPLLENINFTISPGEHICLLGKSGVGKTSLLNCITNTKTISKGTIYFNGIASNNKDYKQLKKQFSFLDQVPNLIDTDFVYDAIWREAKNNLKWWQRLFLVEPQSLREQIIQILEEVNLKEYVTYIIKDLSGGQKQRVEVAKLFFANSQVLLVDEPTTGLDLINAHKIMELIIQFARQKAMTLIFVTHDVEFALKYSDRIIALKNKALVLDQATNKLTKQKLMQIYHD</sequence>
<gene>
    <name type="primary">p29</name>
    <name type="ordered locus">MPN_416</name>
    <name type="ORF">MP424</name>
</gene>
<proteinExistence type="inferred from homology"/>
<evidence type="ECO:0000255" key="1">
    <source>
        <dbReference type="PROSITE-ProRule" id="PRU00434"/>
    </source>
</evidence>
<evidence type="ECO:0000305" key="2"/>
<comment type="function">
    <text>Part of a high-affinity transport system.</text>
</comment>
<comment type="similarity">
    <text evidence="2">Belongs to the ABC transporter superfamily.</text>
</comment>
<keyword id="KW-0067">ATP-binding</keyword>
<keyword id="KW-0547">Nucleotide-binding</keyword>
<keyword id="KW-1185">Reference proteome</keyword>
<keyword id="KW-0813">Transport</keyword>